<comment type="function">
    <text evidence="1">Attaches a formyl group to the free amino group of methionyl-tRNA(fMet). The formyl group appears to play a dual role in the initiator identity of N-formylmethionyl-tRNA by promoting its recognition by IF2 and preventing the misappropriation of this tRNA by the elongation apparatus.</text>
</comment>
<comment type="catalytic activity">
    <reaction evidence="1">
        <text>L-methionyl-tRNA(fMet) + (6R)-10-formyltetrahydrofolate = N-formyl-L-methionyl-tRNA(fMet) + (6S)-5,6,7,8-tetrahydrofolate + H(+)</text>
        <dbReference type="Rhea" id="RHEA:24380"/>
        <dbReference type="Rhea" id="RHEA-COMP:9952"/>
        <dbReference type="Rhea" id="RHEA-COMP:9953"/>
        <dbReference type="ChEBI" id="CHEBI:15378"/>
        <dbReference type="ChEBI" id="CHEBI:57453"/>
        <dbReference type="ChEBI" id="CHEBI:78530"/>
        <dbReference type="ChEBI" id="CHEBI:78844"/>
        <dbReference type="ChEBI" id="CHEBI:195366"/>
        <dbReference type="EC" id="2.1.2.9"/>
    </reaction>
</comment>
<comment type="similarity">
    <text evidence="1">Belongs to the Fmt family.</text>
</comment>
<evidence type="ECO:0000255" key="1">
    <source>
        <dbReference type="HAMAP-Rule" id="MF_00182"/>
    </source>
</evidence>
<dbReference type="EC" id="2.1.2.9" evidence="1"/>
<dbReference type="EMBL" id="AE017198">
    <property type="protein sequence ID" value="AAS09308.1"/>
    <property type="molecule type" value="Genomic_DNA"/>
</dbReference>
<dbReference type="RefSeq" id="WP_011162263.1">
    <property type="nucleotide sequence ID" value="NC_005362.1"/>
</dbReference>
<dbReference type="SMR" id="Q74IM9"/>
<dbReference type="KEGG" id="ljo:LJ_1540"/>
<dbReference type="eggNOG" id="COG0223">
    <property type="taxonomic scope" value="Bacteria"/>
</dbReference>
<dbReference type="HOGENOM" id="CLU_033347_1_1_9"/>
<dbReference type="Proteomes" id="UP000000581">
    <property type="component" value="Chromosome"/>
</dbReference>
<dbReference type="GO" id="GO:0005829">
    <property type="term" value="C:cytosol"/>
    <property type="evidence" value="ECO:0007669"/>
    <property type="project" value="TreeGrafter"/>
</dbReference>
<dbReference type="GO" id="GO:0004479">
    <property type="term" value="F:methionyl-tRNA formyltransferase activity"/>
    <property type="evidence" value="ECO:0007669"/>
    <property type="project" value="UniProtKB-UniRule"/>
</dbReference>
<dbReference type="CDD" id="cd08646">
    <property type="entry name" value="FMT_core_Met-tRNA-FMT_N"/>
    <property type="match status" value="1"/>
</dbReference>
<dbReference type="CDD" id="cd08704">
    <property type="entry name" value="Met_tRNA_FMT_C"/>
    <property type="match status" value="1"/>
</dbReference>
<dbReference type="Gene3D" id="3.40.50.12230">
    <property type="match status" value="1"/>
</dbReference>
<dbReference type="HAMAP" id="MF_00182">
    <property type="entry name" value="Formyl_trans"/>
    <property type="match status" value="1"/>
</dbReference>
<dbReference type="InterPro" id="IPR005794">
    <property type="entry name" value="Fmt"/>
</dbReference>
<dbReference type="InterPro" id="IPR005793">
    <property type="entry name" value="Formyl_trans_C"/>
</dbReference>
<dbReference type="InterPro" id="IPR002376">
    <property type="entry name" value="Formyl_transf_N"/>
</dbReference>
<dbReference type="InterPro" id="IPR036477">
    <property type="entry name" value="Formyl_transf_N_sf"/>
</dbReference>
<dbReference type="InterPro" id="IPR011034">
    <property type="entry name" value="Formyl_transferase-like_C_sf"/>
</dbReference>
<dbReference type="InterPro" id="IPR044135">
    <property type="entry name" value="Met-tRNA-FMT_C"/>
</dbReference>
<dbReference type="InterPro" id="IPR041711">
    <property type="entry name" value="Met-tRNA-FMT_N"/>
</dbReference>
<dbReference type="NCBIfam" id="TIGR00460">
    <property type="entry name" value="fmt"/>
    <property type="match status" value="1"/>
</dbReference>
<dbReference type="PANTHER" id="PTHR11138">
    <property type="entry name" value="METHIONYL-TRNA FORMYLTRANSFERASE"/>
    <property type="match status" value="1"/>
</dbReference>
<dbReference type="PANTHER" id="PTHR11138:SF5">
    <property type="entry name" value="METHIONYL-TRNA FORMYLTRANSFERASE, MITOCHONDRIAL"/>
    <property type="match status" value="1"/>
</dbReference>
<dbReference type="Pfam" id="PF02911">
    <property type="entry name" value="Formyl_trans_C"/>
    <property type="match status" value="1"/>
</dbReference>
<dbReference type="Pfam" id="PF00551">
    <property type="entry name" value="Formyl_trans_N"/>
    <property type="match status" value="1"/>
</dbReference>
<dbReference type="SUPFAM" id="SSF50486">
    <property type="entry name" value="FMT C-terminal domain-like"/>
    <property type="match status" value="1"/>
</dbReference>
<dbReference type="SUPFAM" id="SSF53328">
    <property type="entry name" value="Formyltransferase"/>
    <property type="match status" value="1"/>
</dbReference>
<protein>
    <recommendedName>
        <fullName evidence="1">Methionyl-tRNA formyltransferase</fullName>
        <ecNumber evidence="1">2.1.2.9</ecNumber>
    </recommendedName>
</protein>
<name>FMT_LACJO</name>
<accession>Q74IM9</accession>
<organism>
    <name type="scientific">Lactobacillus johnsonii (strain CNCM I-12250 / La1 / NCC 533)</name>
    <dbReference type="NCBI Taxonomy" id="257314"/>
    <lineage>
        <taxon>Bacteria</taxon>
        <taxon>Bacillati</taxon>
        <taxon>Bacillota</taxon>
        <taxon>Bacilli</taxon>
        <taxon>Lactobacillales</taxon>
        <taxon>Lactobacillaceae</taxon>
        <taxon>Lactobacillus</taxon>
    </lineage>
</organism>
<proteinExistence type="inferred from homology"/>
<feature type="chain" id="PRO_0000082978" description="Methionyl-tRNA formyltransferase">
    <location>
        <begin position="1"/>
        <end position="314"/>
    </location>
</feature>
<feature type="binding site" evidence="1">
    <location>
        <begin position="110"/>
        <end position="113"/>
    </location>
    <ligand>
        <name>(6S)-5,6,7,8-tetrahydrofolate</name>
        <dbReference type="ChEBI" id="CHEBI:57453"/>
    </ligand>
</feature>
<gene>
    <name evidence="1" type="primary">fmt</name>
    <name type="ordered locus">LJ_1540</name>
</gene>
<sequence>MSSVIFLGTPNFGSVVLQGLIEQGYEIKAVVTQPDKRVGRKQVVHQSAVKETALKHNLPVYQPAKLSGSEELAELMKIEPDFIITAAYGQFLPTKFLKSAKVAPVNVHGSLLPKYRGGAPIQYSVLNGDKETGVTIMEMVKKMDAGDIFAQKALPITDEDTSGTLFDKLSILGRDLLLETLPKFIDGTVTRTAQDEDKVVFSPNISKDQEKINLSMTAKEANNLIRALNPDPGAYFMLGGKRFKVWKAKPLTEKTSFPAGTLVTNKKKFVISMADGSQLELLEVQPTGKKKMNIKDYLNGQGSHFTIGDKIIDE</sequence>
<keyword id="KW-0648">Protein biosynthesis</keyword>
<keyword id="KW-0808">Transferase</keyword>
<reference key="1">
    <citation type="journal article" date="2004" name="Proc. Natl. Acad. Sci. U.S.A.">
        <title>The genome sequence of the probiotic intestinal bacterium Lactobacillus johnsonii NCC 533.</title>
        <authorList>
            <person name="Pridmore R.D."/>
            <person name="Berger B."/>
            <person name="Desiere F."/>
            <person name="Vilanova D."/>
            <person name="Barretto C."/>
            <person name="Pittet A.-C."/>
            <person name="Zwahlen M.-C."/>
            <person name="Rouvet M."/>
            <person name="Altermann E."/>
            <person name="Barrangou R."/>
            <person name="Mollet B."/>
            <person name="Mercenier A."/>
            <person name="Klaenhammer T."/>
            <person name="Arigoni F."/>
            <person name="Schell M.A."/>
        </authorList>
    </citation>
    <scope>NUCLEOTIDE SEQUENCE [LARGE SCALE GENOMIC DNA]</scope>
    <source>
        <strain>CNCM I-1225 / La1 / NCC 533</strain>
    </source>
</reference>